<keyword id="KW-1185">Reference proteome</keyword>
<protein>
    <recommendedName>
        <fullName>Uncharacterized protein YagL</fullName>
    </recommendedName>
</protein>
<gene>
    <name type="primary">yagL</name>
    <name type="ordered locus">b0278</name>
    <name type="ordered locus">JW0272</name>
</gene>
<proteinExistence type="predicted"/>
<accession>P77607</accession>
<accession>Q2MCE4</accession>
<name>YAGL_ECOLI</name>
<dbReference type="EMBL" id="U73857">
    <property type="protein sequence ID" value="AAB18007.1"/>
    <property type="molecule type" value="Genomic_DNA"/>
</dbReference>
<dbReference type="EMBL" id="U00096">
    <property type="protein sequence ID" value="AAC73381.1"/>
    <property type="molecule type" value="Genomic_DNA"/>
</dbReference>
<dbReference type="EMBL" id="AP009048">
    <property type="protein sequence ID" value="BAE76062.1"/>
    <property type="molecule type" value="Genomic_DNA"/>
</dbReference>
<dbReference type="PIR" id="F64753">
    <property type="entry name" value="F64753"/>
</dbReference>
<dbReference type="RefSeq" id="NP_414812.1">
    <property type="nucleotide sequence ID" value="NC_000913.3"/>
</dbReference>
<dbReference type="RefSeq" id="WP_001214248.1">
    <property type="nucleotide sequence ID" value="NZ_LN832404.1"/>
</dbReference>
<dbReference type="SMR" id="P77607"/>
<dbReference type="BioGRID" id="4259781">
    <property type="interactions" value="161"/>
</dbReference>
<dbReference type="FunCoup" id="P77607">
    <property type="interactions" value="179"/>
</dbReference>
<dbReference type="IntAct" id="P77607">
    <property type="interactions" value="3"/>
</dbReference>
<dbReference type="STRING" id="511145.b0278"/>
<dbReference type="PaxDb" id="511145-b0278"/>
<dbReference type="EnsemblBacteria" id="AAC73381">
    <property type="protein sequence ID" value="AAC73381"/>
    <property type="gene ID" value="b0278"/>
</dbReference>
<dbReference type="GeneID" id="945845"/>
<dbReference type="KEGG" id="ecj:JW0272"/>
<dbReference type="KEGG" id="eco:b0278"/>
<dbReference type="KEGG" id="ecoc:C3026_01345"/>
<dbReference type="KEGG" id="ecoc:C3026_23980"/>
<dbReference type="PATRIC" id="fig|1411691.4.peg.2001"/>
<dbReference type="EchoBASE" id="EB3321"/>
<dbReference type="eggNOG" id="COG1961">
    <property type="taxonomic scope" value="Bacteria"/>
</dbReference>
<dbReference type="HOGENOM" id="CLU_091317_0_0_6"/>
<dbReference type="InParanoid" id="P77607"/>
<dbReference type="OrthoDB" id="6626146at2"/>
<dbReference type="BioCyc" id="EcoCyc:G6149-MONOMER"/>
<dbReference type="PRO" id="PR:P77607"/>
<dbReference type="Proteomes" id="UP000000625">
    <property type="component" value="Chromosome"/>
</dbReference>
<dbReference type="GO" id="GO:0003677">
    <property type="term" value="F:DNA binding"/>
    <property type="evidence" value="ECO:0007669"/>
    <property type="project" value="InterPro"/>
</dbReference>
<dbReference type="GO" id="GO:0000150">
    <property type="term" value="F:DNA strand exchange activity"/>
    <property type="evidence" value="ECO:0007669"/>
    <property type="project" value="InterPro"/>
</dbReference>
<dbReference type="InterPro" id="IPR053812">
    <property type="entry name" value="HTH_Sigma70_ECF-like"/>
</dbReference>
<dbReference type="InterPro" id="IPR036162">
    <property type="entry name" value="Resolvase-like_N_sf"/>
</dbReference>
<dbReference type="Pfam" id="PF07638">
    <property type="entry name" value="Sigma70_ECF"/>
    <property type="match status" value="1"/>
</dbReference>
<dbReference type="SUPFAM" id="SSF53041">
    <property type="entry name" value="Resolvase-like"/>
    <property type="match status" value="1"/>
</dbReference>
<sequence>MRGKILLYQLKYRWQSLSIFGCFLCKMTLFRYQKIIYDTGVHQMRSFFYTICSSEQQESITDHHSLAEICQKFNILPEHVVIEQVDIKEVVSEQRLLRQLIHHEMNRQDTLVIPDLSCLGRTVEDLQNILFFCLQKEMFIYSYHPASRIEPSAESCLSFLIARQDTIDIHNLKSTKSRYRHVKKKLGRKEGSKYRRDITILKKGGFTQAEIAKKLSISLSTVKRHWNNGIIG</sequence>
<organism>
    <name type="scientific">Escherichia coli (strain K12)</name>
    <dbReference type="NCBI Taxonomy" id="83333"/>
    <lineage>
        <taxon>Bacteria</taxon>
        <taxon>Pseudomonadati</taxon>
        <taxon>Pseudomonadota</taxon>
        <taxon>Gammaproteobacteria</taxon>
        <taxon>Enterobacterales</taxon>
        <taxon>Enterobacteriaceae</taxon>
        <taxon>Escherichia</taxon>
    </lineage>
</organism>
<feature type="chain" id="PRO_0000168558" description="Uncharacterized protein YagL">
    <location>
        <begin position="1"/>
        <end position="232"/>
    </location>
</feature>
<reference key="1">
    <citation type="submission" date="1997-01" db="EMBL/GenBank/DDBJ databases">
        <title>Sequence of minutes 4-25 of Escherichia coli.</title>
        <authorList>
            <person name="Chung E."/>
            <person name="Allen E."/>
            <person name="Araujo R."/>
            <person name="Aparicio A.M."/>
            <person name="Davis K."/>
            <person name="Duncan M."/>
            <person name="Federspiel N."/>
            <person name="Hyman R."/>
            <person name="Kalman S."/>
            <person name="Komp C."/>
            <person name="Kurdi O."/>
            <person name="Lew H."/>
            <person name="Lin D."/>
            <person name="Namath A."/>
            <person name="Oefner P."/>
            <person name="Roberts D."/>
            <person name="Schramm S."/>
            <person name="Davis R.W."/>
        </authorList>
    </citation>
    <scope>NUCLEOTIDE SEQUENCE [LARGE SCALE GENOMIC DNA]</scope>
    <source>
        <strain>K12 / MG1655 / ATCC 47076</strain>
    </source>
</reference>
<reference key="2">
    <citation type="journal article" date="1997" name="Science">
        <title>The complete genome sequence of Escherichia coli K-12.</title>
        <authorList>
            <person name="Blattner F.R."/>
            <person name="Plunkett G. III"/>
            <person name="Bloch C.A."/>
            <person name="Perna N.T."/>
            <person name="Burland V."/>
            <person name="Riley M."/>
            <person name="Collado-Vides J."/>
            <person name="Glasner J.D."/>
            <person name="Rode C.K."/>
            <person name="Mayhew G.F."/>
            <person name="Gregor J."/>
            <person name="Davis N.W."/>
            <person name="Kirkpatrick H.A."/>
            <person name="Goeden M.A."/>
            <person name="Rose D.J."/>
            <person name="Mau B."/>
            <person name="Shao Y."/>
        </authorList>
    </citation>
    <scope>NUCLEOTIDE SEQUENCE [LARGE SCALE GENOMIC DNA]</scope>
    <source>
        <strain>K12 / MG1655 / ATCC 47076</strain>
    </source>
</reference>
<reference key="3">
    <citation type="journal article" date="2006" name="Mol. Syst. Biol.">
        <title>Highly accurate genome sequences of Escherichia coli K-12 strains MG1655 and W3110.</title>
        <authorList>
            <person name="Hayashi K."/>
            <person name="Morooka N."/>
            <person name="Yamamoto Y."/>
            <person name="Fujita K."/>
            <person name="Isono K."/>
            <person name="Choi S."/>
            <person name="Ohtsubo E."/>
            <person name="Baba T."/>
            <person name="Wanner B.L."/>
            <person name="Mori H."/>
            <person name="Horiuchi T."/>
        </authorList>
    </citation>
    <scope>NUCLEOTIDE SEQUENCE [LARGE SCALE GENOMIC DNA]</scope>
    <source>
        <strain>K12 / W3110 / ATCC 27325 / DSM 5911</strain>
    </source>
</reference>